<organism>
    <name type="scientific">Drosophila sechellia</name>
    <name type="common">Fruit fly</name>
    <dbReference type="NCBI Taxonomy" id="7238"/>
    <lineage>
        <taxon>Eukaryota</taxon>
        <taxon>Metazoa</taxon>
        <taxon>Ecdysozoa</taxon>
        <taxon>Arthropoda</taxon>
        <taxon>Hexapoda</taxon>
        <taxon>Insecta</taxon>
        <taxon>Pterygota</taxon>
        <taxon>Neoptera</taxon>
        <taxon>Endopterygota</taxon>
        <taxon>Diptera</taxon>
        <taxon>Brachycera</taxon>
        <taxon>Muscomorpha</taxon>
        <taxon>Ephydroidea</taxon>
        <taxon>Drosophilidae</taxon>
        <taxon>Drosophila</taxon>
        <taxon>Sophophora</taxon>
    </lineage>
</organism>
<keyword id="KW-1003">Cell membrane</keyword>
<keyword id="KW-1015">Disulfide bond</keyword>
<keyword id="KW-0325">Glycoprotein</keyword>
<keyword id="KW-0472">Membrane</keyword>
<keyword id="KW-0552">Olfaction</keyword>
<keyword id="KW-0675">Receptor</keyword>
<keyword id="KW-1185">Reference proteome</keyword>
<keyword id="KW-0716">Sensory transduction</keyword>
<keyword id="KW-0812">Transmembrane</keyword>
<keyword id="KW-1133">Transmembrane helix</keyword>
<dbReference type="EMBL" id="CH480853">
    <property type="protein sequence ID" value="EDW51598.1"/>
    <property type="molecule type" value="Genomic_DNA"/>
</dbReference>
<dbReference type="SMR" id="B4IKJ4"/>
<dbReference type="STRING" id="7238.B4IKJ4"/>
<dbReference type="GlyCosmos" id="B4IKJ4">
    <property type="glycosylation" value="4 sites, No reported glycans"/>
</dbReference>
<dbReference type="EnsemblMetazoa" id="FBtr0198080">
    <property type="protein sequence ID" value="FBpp0196572"/>
    <property type="gene ID" value="FBgn0170015"/>
</dbReference>
<dbReference type="EnsemblMetazoa" id="XM_002044218.2">
    <property type="protein sequence ID" value="XP_002044254.1"/>
    <property type="gene ID" value="LOC6620042"/>
</dbReference>
<dbReference type="GeneID" id="6620042"/>
<dbReference type="KEGG" id="dse:6620042"/>
<dbReference type="CTD" id="42514"/>
<dbReference type="HOGENOM" id="CLU_019853_1_2_1"/>
<dbReference type="OMA" id="QRKSSYH"/>
<dbReference type="OrthoDB" id="21137at7215"/>
<dbReference type="PhylomeDB" id="B4IKJ4"/>
<dbReference type="ChiTaRS" id="Snmp1">
    <property type="organism name" value="fly"/>
</dbReference>
<dbReference type="Proteomes" id="UP000001292">
    <property type="component" value="Unassembled WGS sequence"/>
</dbReference>
<dbReference type="GO" id="GO:0005929">
    <property type="term" value="C:cilium"/>
    <property type="evidence" value="ECO:0007669"/>
    <property type="project" value="EnsemblMetazoa"/>
</dbReference>
<dbReference type="GO" id="GO:0005737">
    <property type="term" value="C:cytoplasm"/>
    <property type="evidence" value="ECO:0007669"/>
    <property type="project" value="TreeGrafter"/>
</dbReference>
<dbReference type="GO" id="GO:0030425">
    <property type="term" value="C:dendrite"/>
    <property type="evidence" value="ECO:0007669"/>
    <property type="project" value="EnsemblMetazoa"/>
</dbReference>
<dbReference type="GO" id="GO:0043025">
    <property type="term" value="C:neuronal cell body"/>
    <property type="evidence" value="ECO:0007669"/>
    <property type="project" value="EnsemblMetazoa"/>
</dbReference>
<dbReference type="GO" id="GO:0005886">
    <property type="term" value="C:plasma membrane"/>
    <property type="evidence" value="ECO:0007669"/>
    <property type="project" value="UniProtKB-SubCell"/>
</dbReference>
<dbReference type="GO" id="GO:0005044">
    <property type="term" value="F:scavenger receptor activity"/>
    <property type="evidence" value="ECO:0007669"/>
    <property type="project" value="TreeGrafter"/>
</dbReference>
<dbReference type="GO" id="GO:0007166">
    <property type="term" value="P:cell surface receptor signaling pathway"/>
    <property type="evidence" value="ECO:0007669"/>
    <property type="project" value="EnsemblMetazoa"/>
</dbReference>
<dbReference type="GO" id="GO:0071444">
    <property type="term" value="P:cellular response to pheromone"/>
    <property type="evidence" value="ECO:0007669"/>
    <property type="project" value="EnsemblMetazoa"/>
</dbReference>
<dbReference type="GO" id="GO:0050911">
    <property type="term" value="P:detection of chemical stimulus involved in sensory perception of smell"/>
    <property type="evidence" value="ECO:0007669"/>
    <property type="project" value="EnsemblMetazoa"/>
</dbReference>
<dbReference type="GO" id="GO:0055088">
    <property type="term" value="P:lipid homeostasis"/>
    <property type="evidence" value="ECO:0007669"/>
    <property type="project" value="EnsemblMetazoa"/>
</dbReference>
<dbReference type="GO" id="GO:0035073">
    <property type="term" value="P:pupariation"/>
    <property type="evidence" value="ECO:0007669"/>
    <property type="project" value="EnsemblMetazoa"/>
</dbReference>
<dbReference type="InterPro" id="IPR005428">
    <property type="entry name" value="CD36/SCARB1/SNMP1"/>
</dbReference>
<dbReference type="InterPro" id="IPR002159">
    <property type="entry name" value="CD36_fam"/>
</dbReference>
<dbReference type="PANTHER" id="PTHR11923">
    <property type="entry name" value="SCAVENGER RECEPTOR CLASS B TYPE-1 SR-B1"/>
    <property type="match status" value="1"/>
</dbReference>
<dbReference type="PANTHER" id="PTHR11923:SF69">
    <property type="entry name" value="SENSORY NEURON MEMBRANE PROTEIN 1"/>
    <property type="match status" value="1"/>
</dbReference>
<dbReference type="Pfam" id="PF01130">
    <property type="entry name" value="CD36"/>
    <property type="match status" value="1"/>
</dbReference>
<dbReference type="PRINTS" id="PR01610">
    <property type="entry name" value="CD36ANTIGEN"/>
</dbReference>
<dbReference type="PRINTS" id="PR01609">
    <property type="entry name" value="CD36FAMILY"/>
</dbReference>
<comment type="function">
    <text evidence="3">Plays an olfactory role that is not restricted to pheromone sensitivity.</text>
</comment>
<comment type="subcellular location">
    <subcellularLocation>
        <location evidence="1">Cell membrane</location>
        <topology evidence="1">Multi-pass membrane protein</topology>
    </subcellularLocation>
</comment>
<comment type="similarity">
    <text evidence="5">Belongs to the CD36 family.</text>
</comment>
<reference evidence="6" key="1">
    <citation type="journal article" date="2007" name="Nature">
        <title>Evolution of genes and genomes on the Drosophila phylogeny.</title>
        <authorList>
            <consortium name="Drosophila 12 genomes consortium"/>
        </authorList>
    </citation>
    <scope>NUCLEOTIDE SEQUENCE [LARGE SCALE GENOMIC DNA]</scope>
    <source>
        <strain evidence="6">Rob3c / Tucson 14021-0248.25</strain>
    </source>
</reference>
<name>SNMP1_DROSE</name>
<feature type="chain" id="PRO_0000408243" description="Sensory neuron membrane protein 1">
    <location>
        <begin position="1"/>
        <end position="551"/>
    </location>
</feature>
<feature type="topological domain" description="Cytoplasmic" evidence="4">
    <location>
        <begin position="1"/>
        <end position="7"/>
    </location>
</feature>
<feature type="transmembrane region" description="Helical" evidence="4">
    <location>
        <begin position="8"/>
        <end position="28"/>
    </location>
</feature>
<feature type="topological domain" description="Extracellular" evidence="4">
    <location>
        <begin position="29"/>
        <end position="459"/>
    </location>
</feature>
<feature type="transmembrane region" description="Helical" evidence="4">
    <location>
        <begin position="460"/>
        <end position="480"/>
    </location>
</feature>
<feature type="topological domain" description="Cytoplasmic" evidence="4">
    <location>
        <begin position="481"/>
        <end position="551"/>
    </location>
</feature>
<feature type="glycosylation site" description="N-linked (GlcNAc...) asparagine" evidence="4">
    <location>
        <position position="66"/>
    </location>
</feature>
<feature type="glycosylation site" description="N-linked (GlcNAc...) asparagine" evidence="4">
    <location>
        <position position="213"/>
    </location>
</feature>
<feature type="glycosylation site" description="N-linked (GlcNAc...) asparagine" evidence="4">
    <location>
        <position position="226"/>
    </location>
</feature>
<feature type="glycosylation site" description="N-linked (GlcNAc...) asparagine" evidence="4">
    <location>
        <position position="440"/>
    </location>
</feature>
<feature type="disulfide bond" evidence="2">
    <location>
        <begin position="265"/>
        <end position="330"/>
    </location>
</feature>
<feature type="disulfide bond" evidence="2">
    <location>
        <begin position="294"/>
        <end position="352"/>
    </location>
</feature>
<feature type="disulfide bond" evidence="2">
    <location>
        <begin position="332"/>
        <end position="341"/>
    </location>
</feature>
<sequence>MQVPRVKLLMGSGAMFVFAIIYGWVIFPKILKFMISKQVTLKPGSDVRELWSNTPFPLHFYIYVFNVTNPDEVSEGAKPRLQEVGPFVFDEWKDKYDLEDDVVEDTVSFTMRNTFIFNPKESLPLTGEEEIILPHPIMLPGGISVQREKAAMMELVSKGLSIVFPNAKAFLKAKFMDLFFRGINVDCSSEEFSAKALCTVFYTGEVKQAKQVNQTHFLFSFMGQANHSDSGRFTVCRGVKNNKKLGKVVKFADEPEQDIWPDGECNNFVGTDSTVFAPGLKKEDGLWAFTPDLCRSLGAYYQHKSSYHGMPSMRYTLDLGDIRADEKLHCFCEDPEDLDTCPPKGTMNLAACVGGPLMASMPHFYLGDPKLVADVDGLNPNEKDHAVYIDFELMSGTPFQAAKRLQFNLDMEPVEGIEPMKNLPKLILPMFWVEEGVQLNKTYTNLVKYTLFLGLKINSVLRWSLITFSLVGLMFSAYLFYHKSDSLDINSILKDNNKVDDVASTKEPMPPANPMQSSTVHPVQLPNTLIPGTNPATNPATHLKMEHRERY</sequence>
<proteinExistence type="inferred from homology"/>
<evidence type="ECO:0000250" key="1">
    <source>
        <dbReference type="UniProtKB" id="O02351"/>
    </source>
</evidence>
<evidence type="ECO:0000250" key="2">
    <source>
        <dbReference type="UniProtKB" id="P26201"/>
    </source>
</evidence>
<evidence type="ECO:0000250" key="3">
    <source>
        <dbReference type="UniProtKB" id="Q9VDD3"/>
    </source>
</evidence>
<evidence type="ECO:0000255" key="4"/>
<evidence type="ECO:0000305" key="5"/>
<evidence type="ECO:0000312" key="6">
    <source>
        <dbReference type="EMBL" id="EDW51598.1"/>
    </source>
</evidence>
<accession>B4IKJ4</accession>
<gene>
    <name evidence="3" type="primary">Snmp1</name>
    <name type="ORF">GM15095</name>
</gene>
<protein>
    <recommendedName>
        <fullName evidence="3">Sensory neuron membrane protein 1</fullName>
    </recommendedName>
</protein>